<feature type="chain" id="PRO_0000202291" description="Uncharacterized protein TP_0625">
    <location>
        <begin position="1"/>
        <end position="250"/>
    </location>
</feature>
<feature type="region of interest" description="Disordered" evidence="2">
    <location>
        <begin position="201"/>
        <end position="250"/>
    </location>
</feature>
<feature type="coiled-coil region" evidence="1">
    <location>
        <begin position="165"/>
        <end position="208"/>
    </location>
</feature>
<feature type="compositionally biased region" description="Basic and acidic residues" evidence="2">
    <location>
        <begin position="201"/>
        <end position="233"/>
    </location>
</feature>
<accession>O83633</accession>
<sequence length="250" mass="28874">MHVPRSILRAGYFSQVKRTCDDVPMAFCSQAQLKGRSTMIKPRAYALLGVFFLYACASTPREEDVPEKFTPADLMLRAQESYDAGNITWARFYYQTVLDRFPNNESAVISAEFELAHILVKQKSWQDAYNRLMYILKKYEAAGSARLPPAYYKLTLIDLSRVKPHLNLETANTKATEYQKNYQEELKQRQELRQKLLQERTQKMLEALHQEETPEQDARDTAKKKTDQEEHTMRKANAPKTKASGEAPTP</sequence>
<keyword id="KW-0175">Coiled coil</keyword>
<keyword id="KW-1185">Reference proteome</keyword>
<dbReference type="EMBL" id="AE000520">
    <property type="protein sequence ID" value="AAC65604.1"/>
    <property type="molecule type" value="Genomic_DNA"/>
</dbReference>
<dbReference type="PIR" id="B71302">
    <property type="entry name" value="B71302"/>
</dbReference>
<dbReference type="RefSeq" id="WP_010882071.1">
    <property type="nucleotide sequence ID" value="NC_021490.2"/>
</dbReference>
<dbReference type="SMR" id="O83633"/>
<dbReference type="IntAct" id="O83633">
    <property type="interactions" value="1"/>
</dbReference>
<dbReference type="STRING" id="243276.TP_0625"/>
<dbReference type="EnsemblBacteria" id="AAC65604">
    <property type="protein sequence ID" value="AAC65604"/>
    <property type="gene ID" value="TP_0625"/>
</dbReference>
<dbReference type="KEGG" id="tpa:TP_0625"/>
<dbReference type="KEGG" id="tpw:TPANIC_0625"/>
<dbReference type="eggNOG" id="ENOG5032BIC">
    <property type="taxonomic scope" value="Bacteria"/>
</dbReference>
<dbReference type="HOGENOM" id="CLU_1299267_0_0_12"/>
<dbReference type="OrthoDB" id="369771at2"/>
<dbReference type="Proteomes" id="UP000000811">
    <property type="component" value="Chromosome"/>
</dbReference>
<dbReference type="Gene3D" id="1.25.40.10">
    <property type="entry name" value="Tetratricopeptide repeat domain"/>
    <property type="match status" value="1"/>
</dbReference>
<dbReference type="InterPro" id="IPR011990">
    <property type="entry name" value="TPR-like_helical_dom_sf"/>
</dbReference>
<name>Y625_TREPA</name>
<protein>
    <recommendedName>
        <fullName>Uncharacterized protein TP_0625</fullName>
    </recommendedName>
</protein>
<evidence type="ECO:0000255" key="1"/>
<evidence type="ECO:0000256" key="2">
    <source>
        <dbReference type="SAM" id="MobiDB-lite"/>
    </source>
</evidence>
<reference key="1">
    <citation type="journal article" date="1998" name="Science">
        <title>Complete genome sequence of Treponema pallidum, the syphilis spirochete.</title>
        <authorList>
            <person name="Fraser C.M."/>
            <person name="Norris S.J."/>
            <person name="Weinstock G.M."/>
            <person name="White O."/>
            <person name="Sutton G.G."/>
            <person name="Dodson R.J."/>
            <person name="Gwinn M.L."/>
            <person name="Hickey E.K."/>
            <person name="Clayton R.A."/>
            <person name="Ketchum K.A."/>
            <person name="Sodergren E."/>
            <person name="Hardham J.M."/>
            <person name="McLeod M.P."/>
            <person name="Salzberg S.L."/>
            <person name="Peterson J.D."/>
            <person name="Khalak H.G."/>
            <person name="Richardson D.L."/>
            <person name="Howell J.K."/>
            <person name="Chidambaram M."/>
            <person name="Utterback T.R."/>
            <person name="McDonald L.A."/>
            <person name="Artiach P."/>
            <person name="Bowman C."/>
            <person name="Cotton M.D."/>
            <person name="Fujii C."/>
            <person name="Garland S.A."/>
            <person name="Hatch B."/>
            <person name="Horst K."/>
            <person name="Roberts K.M."/>
            <person name="Sandusky M."/>
            <person name="Weidman J.F."/>
            <person name="Smith H.O."/>
            <person name="Venter J.C."/>
        </authorList>
    </citation>
    <scope>NUCLEOTIDE SEQUENCE [LARGE SCALE GENOMIC DNA]</scope>
    <source>
        <strain>Nichols</strain>
    </source>
</reference>
<gene>
    <name type="ordered locus">TP_0625</name>
</gene>
<proteinExistence type="predicted"/>
<organism>
    <name type="scientific">Treponema pallidum (strain Nichols)</name>
    <dbReference type="NCBI Taxonomy" id="243276"/>
    <lineage>
        <taxon>Bacteria</taxon>
        <taxon>Pseudomonadati</taxon>
        <taxon>Spirochaetota</taxon>
        <taxon>Spirochaetia</taxon>
        <taxon>Spirochaetales</taxon>
        <taxon>Treponemataceae</taxon>
        <taxon>Treponema</taxon>
    </lineage>
</organism>